<proteinExistence type="inferred from homology"/>
<comment type="function">
    <text evidence="1">Capsid protein (CA) is the structural component of the virus-like particle (VLP), forming the shell that encapsulates the retrotransposons dimeric RNA genome. The particles are assembled from trimer-clustered units and there are holes in the capsid shells that allow for the diffusion of macromolecules. CA also has nucleocapsid-like chaperone activity, promoting primer tRNA(i)-Met annealing to the multipartite primer-binding site (PBS), dimerization of Ty1 RNA and initiation of reverse transcription (By similarity).</text>
</comment>
<comment type="function">
    <text evidence="1">The aspartyl protease (PR) mediates the proteolytic cleavages of the Gag and Gag-Pol polyproteins after assembly of the VLP.</text>
</comment>
<comment type="function">
    <text evidence="1">Reverse transcriptase/ribonuclease H (RT) is a multifunctional enzyme that catalyzes the conversion of the retro-elements RNA genome into dsDNA within the VLP. The enzyme displays a DNA polymerase activity that can copy either DNA or RNA templates, and a ribonuclease H (RNase H) activity that cleaves the RNA strand of RNA-DNA heteroduplexes during plus-strand synthesis and hydrolyzes RNA primers. The conversion leads to a linear dsDNA copy of the retrotransposon that includes long terminal repeats (LTRs) at both ends (By similarity).</text>
</comment>
<comment type="function">
    <text evidence="1">Integrase (IN) targets the VLP to the nucleus, where a subparticle preintegration complex (PIC) containing at least integrase and the newly synthesized dsDNA copy of the retrotransposon must transit the nuclear membrane. Once in the nucleus, integrase performs the integration of the dsDNA into the host genome (By similarity).</text>
</comment>
<comment type="catalytic activity">
    <reaction>
        <text>DNA(n) + a 2'-deoxyribonucleoside 5'-triphosphate = DNA(n+1) + diphosphate</text>
        <dbReference type="Rhea" id="RHEA:22508"/>
        <dbReference type="Rhea" id="RHEA-COMP:17339"/>
        <dbReference type="Rhea" id="RHEA-COMP:17340"/>
        <dbReference type="ChEBI" id="CHEBI:33019"/>
        <dbReference type="ChEBI" id="CHEBI:61560"/>
        <dbReference type="ChEBI" id="CHEBI:173112"/>
        <dbReference type="EC" id="2.7.7.49"/>
    </reaction>
</comment>
<comment type="catalytic activity">
    <reaction>
        <text>DNA(n) + a 2'-deoxyribonucleoside 5'-triphosphate = DNA(n+1) + diphosphate</text>
        <dbReference type="Rhea" id="RHEA:22508"/>
        <dbReference type="Rhea" id="RHEA-COMP:17339"/>
        <dbReference type="Rhea" id="RHEA-COMP:17340"/>
        <dbReference type="ChEBI" id="CHEBI:33019"/>
        <dbReference type="ChEBI" id="CHEBI:61560"/>
        <dbReference type="ChEBI" id="CHEBI:173112"/>
        <dbReference type="EC" id="2.7.7.7"/>
    </reaction>
</comment>
<comment type="catalytic activity">
    <reaction>
        <text>Endonucleolytic cleavage to 5'-phosphomonoester.</text>
        <dbReference type="EC" id="3.1.26.4"/>
    </reaction>
</comment>
<comment type="subunit">
    <text evidence="1">The capsid protein forms a homotrimer, from which the VLPs are assembled. The protease is a homodimer, whose active site consists of two apposed aspartic acid residues (By similarity).</text>
</comment>
<comment type="subcellular location">
    <subcellularLocation>
        <location>Cytoplasm</location>
    </subcellularLocation>
    <subcellularLocation>
        <location evidence="1">Nucleus</location>
    </subcellularLocation>
</comment>
<comment type="alternative products">
    <event type="ribosomal frameshifting"/>
    <isoform>
        <id>O13535-1</id>
        <name>Transposon Ty1-H Gag-Pol polyprotein</name>
        <sequence type="displayed"/>
    </isoform>
    <isoform>
        <id>P0C2I4-1</id>
        <name>Transposon Ty1-H Gag polyprotein</name>
        <sequence type="external"/>
    </isoform>
    <text evidence="1">The Gag-Pol polyprotein is generated by a +1 ribosomal frameshift. The ratio of Gag:Gag-Pol varies between 20:1 and 5:1 (By similarity).</text>
</comment>
<comment type="domain">
    <text evidence="1">The C-terminal RNA-binding region of CA is sufficient for all its nucleocapsid-like chaperone activities.</text>
</comment>
<comment type="domain">
    <text evidence="1">Integrase core domain contains the D-x(n)-D-x(35)-E motif, named for the phylogenetically conserved glutamic acid and aspartic acid residues and the invariant 35 amino acid spacing between the second and third acidic residues. Each acidic residue of the D,D(35)E motif is independently essential for the 3'-processing and strand transfer activities of purified integrase protein (By similarity).</text>
</comment>
<comment type="PTM">
    <text evidence="1">Initially, virus-like particles (VLPs) are composed of the structural unprocessed proteins Gag and Gag-Pol, and also contain the host initiator methionine tRNA (tRNA(i)-Met) which serves as a primer for minus-strand DNA synthesis, and a dimer of genomic Ty RNA. Processing of the polyproteins occurs within the particle and proceeds by an ordered pathway, called maturation. First, the protease (PR) is released by autocatalytic cleavage of the Gag-Pol polyprotein yielding capsid protein p45 and a Pol-p154 precursor protein. This cleavage is a prerequisite for subsequent processing of Pol-p154 at the remaining sites to release the mature structural and catalytic proteins. Maturation takes place prior to the RT reaction and is required to produce transposition-competent VLPs (By similarity).</text>
</comment>
<comment type="miscellaneous">
    <text>Retrotransposons are mobile genetic entities that are able to replicate via an RNA intermediate and a reverse transcription step. In contrast to retroviruses, retrotransposons are non-infectious, lack an envelope and remain intracellular. Ty1 retrotransposons belong to the copia elements (pseudoviridae).</text>
</comment>
<comment type="miscellaneous">
    <molecule>Isoform Transposon Ty1-H Gag-Pol polyprotein</molecule>
    <text>Produced by +1 ribosomal frameshifting between codon Leu-435 and Gly-436 of the YHR214C-C ORF.</text>
</comment>
<keyword id="KW-0064">Aspartyl protease</keyword>
<keyword id="KW-0067">ATP-binding</keyword>
<keyword id="KW-0963">Cytoplasm</keyword>
<keyword id="KW-0229">DNA integration</keyword>
<keyword id="KW-0233">DNA recombination</keyword>
<keyword id="KW-0238">DNA-binding</keyword>
<keyword id="KW-0239">DNA-directed DNA polymerase</keyword>
<keyword id="KW-0255">Endonuclease</keyword>
<keyword id="KW-0378">Hydrolase</keyword>
<keyword id="KW-0460">Magnesium</keyword>
<keyword id="KW-0479">Metal-binding</keyword>
<keyword id="KW-0511">Multifunctional enzyme</keyword>
<keyword id="KW-0540">Nuclease</keyword>
<keyword id="KW-0547">Nucleotide-binding</keyword>
<keyword id="KW-0548">Nucleotidyltransferase</keyword>
<keyword id="KW-0539">Nucleus</keyword>
<keyword id="KW-0645">Protease</keyword>
<keyword id="KW-1185">Reference proteome</keyword>
<keyword id="KW-0688">Ribosomal frameshifting</keyword>
<keyword id="KW-0694">RNA-binding</keyword>
<keyword id="KW-0695">RNA-directed DNA polymerase</keyword>
<keyword id="KW-0808">Transferase</keyword>
<keyword id="KW-0814">Transposable element</keyword>
<keyword id="KW-0815">Transposition</keyword>
<keyword id="KW-1188">Viral release from host cell</keyword>
<keyword id="KW-0917">Virion maturation</keyword>
<keyword id="KW-0862">Zinc</keyword>
<keyword id="KW-0863">Zinc-finger</keyword>
<name>YH11B_YEAST</name>
<sequence>MESQQLSNYPHISHGSACASVTSKEVHTNQDPLDVSASKIQEYDKASTKANSQQTTTPASSAVPENLHHASPQPASVPPPQNGPYPQQCMMTQNQANPSGWSFYGHPSMIPYTPYQMSPMYFPPGPQSQFPQYPSSVGTPLSTPSPESGNTFTDSSSADSDMTSTKKYVRPPPMLTSPNDFPNWVKTYIKFLQNSNLGGIIPTVNGKPVPPMLTSPNDFPNWVKTYIKFLQNSNLGGIIPTVNGKPVRQITDDELTFLYNTFQIFAPSQFLPTWVKDILSVDYTDIMKILSKSIEKMQSDTQEANDIVTLANLQYNGSTPADAFETKVTNIIDRLNNNGIHINNKVACQLIMRGLSGEYKFLRYTRHRHLNMTVAELFLDIHAIYEEQQGSRNSKPNYRRNPSDEKNDSRSYTNTTKPKVIARNPQKTNNSKSKTARAHNVSTSNNSPSTDNDSISKSTTEPIQLNNKHDLHLGQKLTESTVNHTNHSDDELPGHLLLDSGASRTLIRSAHHIHSASSNPDINVVDAQKRNIPINAIGDLQFHFQDNTKTSIKVLHTPNIAYDLLSLNELAAVDITACFTKNVLERSDGTVLAPIVKYGDFYWVSKKYLLPSNISVPTINNVHTSESTRKYPYPFIHRMLAHANAQTIRYSLKNNTITYFNESDVDWSSAIDYQCPDCLIGKSTKHRHIKGSRLKYQNSYEPFQYLHTDIFGPVHNLPKSAPSYFISFTDETTKFRWVYPLHDRREDSILDVFTTILAFIKNQFQASVLVIQMDRGSEYTNRTLHKFLEKNGITPCYTTTADSRAHGVAERLNRTLLDDCRTQLQCSGLPNHLWFSAIEFSTIVRNSLASPKSKKSARQHAGLAGLDISTLLPFGQPVIVNDHNPNSKIHPRGIPGYALHPSRNSYGYIIYLPSLKKTVDTTNYVILQGKESRLDQFNYDALTFDEDLNRLTASYHSFIASNEIQQSNDLNIESDHDFQSDIELHPEQLRNVLSKAVSPTDSTPPSTHTEDSKRVSKTNIRAPREVDPNISESNILPSKKRSSTPQISDIESTGSGGMHRLDVPLLAPMSQSNTHESSHASKSKDFRHSDSYSDNETNHTNVPISSTGGTNNKTVPQTSEQETEKRIIHRSPSIDTSSSESNSLHHVVPIKTSDTCPKENTEESIIADLPLPDLPPEPPTELSDSFKELPPINSHQTNSSLGGIGDSNAYTTINSKKRSLEDNETEIKVSRDTWNTKNMRSLEPPRSKKRIHLIAAVKAVKSIKPIRTTLRYDEAITYNKDIKEKEKYIQAYHKEVNQLLMMKTWDTDRYYDRKEIDPKRVINSMFIFNRKRDGTHKARFVARGDIQHPDTYDPGMQSNTVHHYALMTSLSLALDNNYYITQLDISSAYLYADIKEELYIRPPPHLGMNDKLIRLKKSLYGLKQSGANWYETIKSYLIKQCGMEEVRGWSCVFKNSQVTICLFVDDMILFSKDLNANKKIITTLKKQYDTKIINLGESDNEIQYDILGLEIKYQRGKYMKLGMENSLTEKIPKLNVPLNPKGRKLSAPGQPGLYIDQDELEIDEDEYKEKVHEMQKLIGLASYVGYKFRFDLLYYINTLAQHILFPSRQVLDMTYELIQFMWDTRDKQLIWHKNKPTEPDNKLVAISDASYGNQPYYKSQIGNIYLLNGKVIGGKSTKASLTCTSTTEAEIHAISESVPLLNNLSHLVQELNKKPITKGLLTDSKSTISIIISNNEEKFRNRFFGTKAMRLRDEVSGNHLHVCYIETKKNIADVMTKPLPIKTFKLLTNKWIH</sequence>
<protein>
    <recommendedName>
        <fullName>Transposon Ty1-H Gag-Pol polyprotein</fullName>
    </recommendedName>
    <alternativeName>
        <fullName>Gag-Pol-p199</fullName>
    </alternativeName>
    <alternativeName>
        <fullName>TY1A-TY1B</fullName>
    </alternativeName>
    <alternativeName>
        <fullName>Transposon Ty1 TYA-TYB polyprotein</fullName>
    </alternativeName>
    <alternativeName>
        <fullName>p190</fullName>
    </alternativeName>
    <component>
        <recommendedName>
            <fullName>Capsid protein</fullName>
            <shortName>CA</shortName>
        </recommendedName>
        <alternativeName>
            <fullName>Gag-p45</fullName>
        </alternativeName>
        <alternativeName>
            <fullName>p54</fullName>
        </alternativeName>
    </component>
    <component>
        <recommendedName>
            <fullName>Ty1 protease</fullName>
            <shortName>PR</shortName>
            <ecNumber>3.4.23.-</ecNumber>
        </recommendedName>
        <alternativeName>
            <fullName>Pol-p20</fullName>
        </alternativeName>
        <alternativeName>
            <fullName>p23</fullName>
        </alternativeName>
    </component>
    <component>
        <recommendedName>
            <fullName>Integrase</fullName>
            <shortName>IN</shortName>
        </recommendedName>
        <alternativeName>
            <fullName>Pol-p71</fullName>
        </alternativeName>
        <alternativeName>
            <fullName>p84</fullName>
        </alternativeName>
        <alternativeName>
            <fullName>p90</fullName>
        </alternativeName>
    </component>
    <component>
        <recommendedName>
            <fullName>Reverse transcriptase/ribonuclease H</fullName>
            <shortName>RT</shortName>
            <shortName>RT-RH</shortName>
            <ecNumber>2.7.7.49</ecNumber>
            <ecNumber>2.7.7.7</ecNumber>
            <ecNumber>3.1.26.4</ecNumber>
        </recommendedName>
        <alternativeName>
            <fullName>Pol-p63</fullName>
        </alternativeName>
        <alternativeName>
            <fullName>p60</fullName>
        </alternativeName>
    </component>
</protein>
<feature type="chain" id="PRO_0000279074" description="Transposon Ty1-H Gag-Pol polyprotein">
    <location>
        <begin position="1"/>
        <end position="1793"/>
    </location>
</feature>
<feature type="chain" id="PRO_0000279075" description="Capsid protein" evidence="1">
    <location>
        <begin position="1"/>
        <end position="439"/>
    </location>
</feature>
<feature type="chain" id="PRO_0000279076" description="Ty1 protease" evidence="1">
    <location>
        <begin position="440"/>
        <end position="620"/>
    </location>
</feature>
<feature type="chain" id="PRO_0000279077" description="Integrase" evidence="1">
    <location>
        <begin position="621"/>
        <end position="1255"/>
    </location>
</feature>
<feature type="chain" id="PRO_0000279078" description="Reverse transcriptase/ribonuclease H" evidence="1">
    <location>
        <begin position="1256"/>
        <end position="1793"/>
    </location>
</feature>
<feature type="domain" description="Integrase catalytic" evidence="2">
    <location>
        <begin position="698"/>
        <end position="873"/>
    </location>
</feature>
<feature type="domain" description="Reverse transcriptase Ty1/copia-type">
    <location>
        <begin position="1376"/>
        <end position="1514"/>
    </location>
</feature>
<feature type="domain" description="RNase H Ty1/copia-type">
    <location>
        <begin position="1648"/>
        <end position="1790"/>
    </location>
</feature>
<feature type="region of interest" description="Disordered" evidence="4">
    <location>
        <begin position="1"/>
        <end position="84"/>
    </location>
</feature>
<feature type="region of interest" description="Disordered" evidence="4">
    <location>
        <begin position="126"/>
        <end position="174"/>
    </location>
</feature>
<feature type="region of interest" description="RNA-binding" evidence="1">
    <location>
        <begin position="337"/>
        <end position="439"/>
    </location>
</feature>
<feature type="region of interest" description="Disordered" evidence="4">
    <location>
        <begin position="390"/>
        <end position="459"/>
    </location>
</feature>
<feature type="region of interest" description="Integrase-type zinc finger-like">
    <location>
        <begin position="621"/>
        <end position="678"/>
    </location>
</feature>
<feature type="region of interest" description="Disordered" evidence="4">
    <location>
        <begin position="996"/>
        <end position="1208"/>
    </location>
</feature>
<feature type="short sequence motif" description="Bipartite nuclear localization signal" evidence="1">
    <location>
        <begin position="1216"/>
        <end position="1250"/>
    </location>
</feature>
<feature type="compositionally biased region" description="Polar residues" evidence="4">
    <location>
        <begin position="1"/>
        <end position="10"/>
    </location>
</feature>
<feature type="compositionally biased region" description="Polar residues" evidence="4">
    <location>
        <begin position="48"/>
        <end position="60"/>
    </location>
</feature>
<feature type="compositionally biased region" description="Polar residues" evidence="4">
    <location>
        <begin position="127"/>
        <end position="152"/>
    </location>
</feature>
<feature type="compositionally biased region" description="Low complexity" evidence="4">
    <location>
        <begin position="153"/>
        <end position="165"/>
    </location>
</feature>
<feature type="compositionally biased region" description="Low complexity" evidence="4">
    <location>
        <begin position="440"/>
        <end position="456"/>
    </location>
</feature>
<feature type="compositionally biased region" description="Low complexity" evidence="4">
    <location>
        <begin position="998"/>
        <end position="1007"/>
    </location>
</feature>
<feature type="compositionally biased region" description="Polar residues" evidence="4">
    <location>
        <begin position="1043"/>
        <end position="1053"/>
    </location>
</feature>
<feature type="compositionally biased region" description="Basic and acidic residues" evidence="4">
    <location>
        <begin position="1076"/>
        <end position="1091"/>
    </location>
</feature>
<feature type="compositionally biased region" description="Polar residues" evidence="4">
    <location>
        <begin position="1092"/>
        <end position="1120"/>
    </location>
</feature>
<feature type="compositionally biased region" description="Polar residues" evidence="4">
    <location>
        <begin position="1133"/>
        <end position="1144"/>
    </location>
</feature>
<feature type="active site" description="For protease activity; shared with dimeric partner" evidence="3">
    <location>
        <position position="499"/>
    </location>
</feature>
<feature type="binding site" evidence="2">
    <location>
        <position position="709"/>
    </location>
    <ligand>
        <name>Mg(2+)</name>
        <dbReference type="ChEBI" id="CHEBI:18420"/>
        <label>1</label>
        <note>catalytic; for integrase activity</note>
    </ligand>
</feature>
<feature type="binding site" evidence="2">
    <location>
        <position position="774"/>
    </location>
    <ligand>
        <name>Mg(2+)</name>
        <dbReference type="ChEBI" id="CHEBI:18420"/>
        <label>1</label>
        <note>catalytic; for integrase activity</note>
    </ligand>
</feature>
<feature type="binding site" evidence="2">
    <location>
        <position position="1384"/>
    </location>
    <ligand>
        <name>Mg(2+)</name>
        <dbReference type="ChEBI" id="CHEBI:18420"/>
        <label>2</label>
        <note>catalytic; for reverse transcriptase activity</note>
    </ligand>
</feature>
<feature type="binding site" evidence="2">
    <location>
        <position position="1465"/>
    </location>
    <ligand>
        <name>Mg(2+)</name>
        <dbReference type="ChEBI" id="CHEBI:18420"/>
        <label>2</label>
        <note>catalytic; for reverse transcriptase activity</note>
    </ligand>
</feature>
<feature type="binding site" evidence="2">
    <location>
        <position position="1466"/>
    </location>
    <ligand>
        <name>Mg(2+)</name>
        <dbReference type="ChEBI" id="CHEBI:18420"/>
        <label>2</label>
        <note>catalytic; for reverse transcriptase activity</note>
    </ligand>
</feature>
<feature type="binding site" evidence="2">
    <location>
        <position position="1648"/>
    </location>
    <ligand>
        <name>Mg(2+)</name>
        <dbReference type="ChEBI" id="CHEBI:18420"/>
        <label>3</label>
        <note>catalytic; for RNase H activity</note>
    </ligand>
</feature>
<feature type="binding site" evidence="2">
    <location>
        <position position="1690"/>
    </location>
    <ligand>
        <name>Mg(2+)</name>
        <dbReference type="ChEBI" id="CHEBI:18420"/>
        <label>3</label>
        <note>catalytic; for RNase H activity</note>
    </ligand>
</feature>
<feature type="binding site" evidence="2">
    <location>
        <position position="1723"/>
    </location>
    <ligand>
        <name>Mg(2+)</name>
        <dbReference type="ChEBI" id="CHEBI:18420"/>
        <label>3</label>
        <note>catalytic; for RNase H activity</note>
    </ligand>
</feature>
<feature type="site" description="Cleavage; by Ty1 protease" evidence="1">
    <location>
        <begin position="439"/>
        <end position="440"/>
    </location>
</feature>
<feature type="site" description="Cleavage; by Ty1 protease" evidence="1">
    <location>
        <begin position="620"/>
        <end position="621"/>
    </location>
</feature>
<feature type="site" description="Cleavage; by Ty1 protease" evidence="1">
    <location>
        <begin position="1255"/>
        <end position="1256"/>
    </location>
</feature>
<gene>
    <name type="primary">TY1B-H</name>
    <name type="synonym">YHRCTy1-1 POL</name>
    <name type="ordered locus">YHR214C-B</name>
</gene>
<organism>
    <name type="scientific">Saccharomyces cerevisiae (strain ATCC 204508 / S288c)</name>
    <name type="common">Baker's yeast</name>
    <dbReference type="NCBI Taxonomy" id="559292"/>
    <lineage>
        <taxon>Eukaryota</taxon>
        <taxon>Fungi</taxon>
        <taxon>Dikarya</taxon>
        <taxon>Ascomycota</taxon>
        <taxon>Saccharomycotina</taxon>
        <taxon>Saccharomycetes</taxon>
        <taxon>Saccharomycetales</taxon>
        <taxon>Saccharomycetaceae</taxon>
        <taxon>Saccharomyces</taxon>
    </lineage>
</organism>
<evidence type="ECO:0000250" key="1"/>
<evidence type="ECO:0000255" key="2">
    <source>
        <dbReference type="PROSITE-ProRule" id="PRU00457"/>
    </source>
</evidence>
<evidence type="ECO:0000255" key="3">
    <source>
        <dbReference type="PROSITE-ProRule" id="PRU10094"/>
    </source>
</evidence>
<evidence type="ECO:0000256" key="4">
    <source>
        <dbReference type="SAM" id="MobiDB-lite"/>
    </source>
</evidence>
<accession>O13535</accession>
<accession>D3DLG6</accession>
<reference key="1">
    <citation type="journal article" date="1994" name="Science">
        <title>Complete nucleotide sequence of Saccharomyces cerevisiae chromosome VIII.</title>
        <authorList>
            <person name="Johnston M."/>
            <person name="Andrews S."/>
            <person name="Brinkman R."/>
            <person name="Cooper J."/>
            <person name="Ding H."/>
            <person name="Dover J."/>
            <person name="Du Z."/>
            <person name="Favello A."/>
            <person name="Fulton L."/>
            <person name="Gattung S."/>
            <person name="Geisel C."/>
            <person name="Kirsten J."/>
            <person name="Kucaba T."/>
            <person name="Hillier L.W."/>
            <person name="Jier M."/>
            <person name="Johnston L."/>
            <person name="Langston Y."/>
            <person name="Latreille P."/>
            <person name="Louis E.J."/>
            <person name="Macri C."/>
            <person name="Mardis E."/>
            <person name="Menezes S."/>
            <person name="Mouser L."/>
            <person name="Nhan M."/>
            <person name="Rifkin L."/>
            <person name="Riles L."/>
            <person name="St Peter H."/>
            <person name="Trevaskis E."/>
            <person name="Vaughan K."/>
            <person name="Vignati D."/>
            <person name="Wilcox L."/>
            <person name="Wohldman P."/>
            <person name="Waterston R."/>
            <person name="Wilson R."/>
            <person name="Vaudin M."/>
        </authorList>
    </citation>
    <scope>NUCLEOTIDE SEQUENCE [LARGE SCALE GENOMIC DNA]</scope>
    <source>
        <strain>ATCC 204508 / S288c</strain>
    </source>
</reference>
<reference key="2">
    <citation type="journal article" date="2014" name="G3 (Bethesda)">
        <title>The reference genome sequence of Saccharomyces cerevisiae: Then and now.</title>
        <authorList>
            <person name="Engel S.R."/>
            <person name="Dietrich F.S."/>
            <person name="Fisk D.G."/>
            <person name="Binkley G."/>
            <person name="Balakrishnan R."/>
            <person name="Costanzo M.C."/>
            <person name="Dwight S.S."/>
            <person name="Hitz B.C."/>
            <person name="Karra K."/>
            <person name="Nash R.S."/>
            <person name="Weng S."/>
            <person name="Wong E.D."/>
            <person name="Lloyd P."/>
            <person name="Skrzypek M.S."/>
            <person name="Miyasato S.R."/>
            <person name="Simison M."/>
            <person name="Cherry J.M."/>
        </authorList>
    </citation>
    <scope>GENOME REANNOTATION</scope>
    <source>
        <strain>ATCC 204508 / S288c</strain>
    </source>
</reference>
<reference key="3">
    <citation type="journal article" date="1998" name="Genome Res.">
        <title>Transposable elements and genome organization: a comprehensive survey of retrotransposons revealed by the complete Saccharomyces cerevisiae genome sequence.</title>
        <authorList>
            <person name="Kim J.M."/>
            <person name="Vanguri S."/>
            <person name="Boeke J.D."/>
            <person name="Gabriel A."/>
            <person name="Voytas D.F."/>
        </authorList>
    </citation>
    <scope>NOMENCLATURE</scope>
</reference>
<reference key="4">
    <citation type="journal article" date="2005" name="Cytogenet. Genome Res.">
        <title>Happy together: the life and times of Ty retrotransposons and their hosts.</title>
        <authorList>
            <person name="Lesage P."/>
            <person name="Todeschini A.L."/>
        </authorList>
    </citation>
    <scope>REVIEW</scope>
</reference>
<reference key="5">
    <citation type="journal article" date="2005" name="Cytogenet. Genome Res.">
        <title>Reverse transcriptase and integrase of the Saccharomyces cerevisiae Ty1 element.</title>
        <authorList>
            <person name="Wilhelm F.-X."/>
            <person name="Wilhelm M."/>
            <person name="Gabriel A."/>
        </authorList>
    </citation>
    <scope>REVIEW</scope>
    <scope>DOMAINS</scope>
</reference>
<dbReference type="EC" id="3.4.23.-"/>
<dbReference type="EC" id="2.7.7.49"/>
<dbReference type="EC" id="2.7.7.7"/>
<dbReference type="EC" id="3.1.26.4"/>
<dbReference type="EMBL" id="U00029">
    <property type="protein sequence ID" value="AAB69744.1"/>
    <property type="molecule type" value="Genomic_DNA"/>
</dbReference>
<dbReference type="EMBL" id="BK006934">
    <property type="protein sequence ID" value="DAA06910.1"/>
    <property type="molecule type" value="Genomic_DNA"/>
</dbReference>
<dbReference type="PIR" id="S40969">
    <property type="entry name" value="S40969"/>
</dbReference>
<dbReference type="PIR" id="S52601">
    <property type="entry name" value="S52601"/>
</dbReference>
<dbReference type="RefSeq" id="NP_012086.1">
    <molecule id="O13535-1"/>
    <property type="nucleotide sequence ID" value="NM_001181431.2"/>
</dbReference>
<dbReference type="BioGRID" id="36648">
    <property type="interactions" value="9"/>
</dbReference>
<dbReference type="FunCoup" id="O13535">
    <property type="interactions" value="92"/>
</dbReference>
<dbReference type="IntAct" id="O13535">
    <property type="interactions" value="3"/>
</dbReference>
<dbReference type="MINT" id="O13535"/>
<dbReference type="GlyGen" id="O13535">
    <property type="glycosylation" value="3 sites"/>
</dbReference>
<dbReference type="iPTMnet" id="O13535"/>
<dbReference type="PaxDb" id="4932-YHR214C-B"/>
<dbReference type="PeptideAtlas" id="O13535"/>
<dbReference type="GeneID" id="856623"/>
<dbReference type="KEGG" id="sce:YHR214C-B"/>
<dbReference type="AGR" id="SGD:S000003534"/>
<dbReference type="SGD" id="S000003534">
    <property type="gene designation" value="YHR214C-B"/>
</dbReference>
<dbReference type="VEuPathDB" id="FungiDB:YHR214C-B"/>
<dbReference type="eggNOG" id="KOG0017">
    <property type="taxonomic scope" value="Eukaryota"/>
</dbReference>
<dbReference type="HOGENOM" id="CLU_244151_0_0_1"/>
<dbReference type="InParanoid" id="O13535"/>
<dbReference type="OrthoDB" id="5423336at2759"/>
<dbReference type="Proteomes" id="UP000002311">
    <property type="component" value="Chromosome VIII"/>
</dbReference>
<dbReference type="RNAct" id="O13535">
    <property type="molecule type" value="protein"/>
</dbReference>
<dbReference type="GO" id="GO:0005737">
    <property type="term" value="C:cytoplasm"/>
    <property type="evidence" value="ECO:0007669"/>
    <property type="project" value="UniProtKB-SubCell"/>
</dbReference>
<dbReference type="GO" id="GO:0005634">
    <property type="term" value="C:nucleus"/>
    <property type="evidence" value="ECO:0000314"/>
    <property type="project" value="SGD"/>
</dbReference>
<dbReference type="GO" id="GO:0004190">
    <property type="term" value="F:aspartic-type endopeptidase activity"/>
    <property type="evidence" value="ECO:0007669"/>
    <property type="project" value="UniProtKB-KW"/>
</dbReference>
<dbReference type="GO" id="GO:0005524">
    <property type="term" value="F:ATP binding"/>
    <property type="evidence" value="ECO:0007669"/>
    <property type="project" value="UniProtKB-KW"/>
</dbReference>
<dbReference type="GO" id="GO:0003677">
    <property type="term" value="F:DNA binding"/>
    <property type="evidence" value="ECO:0007669"/>
    <property type="project" value="UniProtKB-KW"/>
</dbReference>
<dbReference type="GO" id="GO:0003887">
    <property type="term" value="F:DNA-directed DNA polymerase activity"/>
    <property type="evidence" value="ECO:0007669"/>
    <property type="project" value="UniProtKB-KW"/>
</dbReference>
<dbReference type="GO" id="GO:0003723">
    <property type="term" value="F:RNA binding"/>
    <property type="evidence" value="ECO:0007669"/>
    <property type="project" value="UniProtKB-KW"/>
</dbReference>
<dbReference type="GO" id="GO:0003964">
    <property type="term" value="F:RNA-directed DNA polymerase activity"/>
    <property type="evidence" value="ECO:0007669"/>
    <property type="project" value="UniProtKB-KW"/>
</dbReference>
<dbReference type="GO" id="GO:0004523">
    <property type="term" value="F:RNA-DNA hybrid ribonuclease activity"/>
    <property type="evidence" value="ECO:0007669"/>
    <property type="project" value="UniProtKB-EC"/>
</dbReference>
<dbReference type="GO" id="GO:0008270">
    <property type="term" value="F:zinc ion binding"/>
    <property type="evidence" value="ECO:0007669"/>
    <property type="project" value="UniProtKB-KW"/>
</dbReference>
<dbReference type="GO" id="GO:0015074">
    <property type="term" value="P:DNA integration"/>
    <property type="evidence" value="ECO:0007669"/>
    <property type="project" value="UniProtKB-KW"/>
</dbReference>
<dbReference type="GO" id="GO:0006310">
    <property type="term" value="P:DNA recombination"/>
    <property type="evidence" value="ECO:0007669"/>
    <property type="project" value="UniProtKB-KW"/>
</dbReference>
<dbReference type="GO" id="GO:0006508">
    <property type="term" value="P:proteolysis"/>
    <property type="evidence" value="ECO:0007669"/>
    <property type="project" value="UniProtKB-KW"/>
</dbReference>
<dbReference type="GO" id="GO:0032196">
    <property type="term" value="P:transposition"/>
    <property type="evidence" value="ECO:0007669"/>
    <property type="project" value="UniProtKB-KW"/>
</dbReference>
<dbReference type="GO" id="GO:0075523">
    <property type="term" value="P:viral translational frameshifting"/>
    <property type="evidence" value="ECO:0007669"/>
    <property type="project" value="UniProtKB-KW"/>
</dbReference>
<dbReference type="CDD" id="cd09272">
    <property type="entry name" value="RNase_HI_RT_Ty1"/>
    <property type="match status" value="1"/>
</dbReference>
<dbReference type="FunFam" id="3.30.420.10:FF:000050">
    <property type="entry name" value="Transposon Ty2-DR3 Gag-Pol polyprotein"/>
    <property type="match status" value="1"/>
</dbReference>
<dbReference type="Gene3D" id="3.30.420.10">
    <property type="entry name" value="Ribonuclease H-like superfamily/Ribonuclease H"/>
    <property type="match status" value="1"/>
</dbReference>
<dbReference type="InterPro" id="IPR001969">
    <property type="entry name" value="Aspartic_peptidase_AS"/>
</dbReference>
<dbReference type="InterPro" id="IPR043502">
    <property type="entry name" value="DNA/RNA_pol_sf"/>
</dbReference>
<dbReference type="InterPro" id="IPR001584">
    <property type="entry name" value="Integrase_cat-core"/>
</dbReference>
<dbReference type="InterPro" id="IPR039537">
    <property type="entry name" value="Retrotran_Ty1/copia-like"/>
</dbReference>
<dbReference type="InterPro" id="IPR012337">
    <property type="entry name" value="RNaseH-like_sf"/>
</dbReference>
<dbReference type="InterPro" id="IPR036397">
    <property type="entry name" value="RNaseH_sf"/>
</dbReference>
<dbReference type="InterPro" id="IPR013103">
    <property type="entry name" value="RVT_2"/>
</dbReference>
<dbReference type="InterPro" id="IPR015820">
    <property type="entry name" value="TYA"/>
</dbReference>
<dbReference type="PANTHER" id="PTHR42648">
    <property type="entry name" value="TRANSPOSASE, PUTATIVE-RELATED"/>
    <property type="match status" value="1"/>
</dbReference>
<dbReference type="PANTHER" id="PTHR42648:SF11">
    <property type="entry name" value="TRANSPOSON TY4-P GAG-POL POLYPROTEIN"/>
    <property type="match status" value="1"/>
</dbReference>
<dbReference type="Pfam" id="PF00665">
    <property type="entry name" value="rve"/>
    <property type="match status" value="1"/>
</dbReference>
<dbReference type="Pfam" id="PF07727">
    <property type="entry name" value="RVT_2"/>
    <property type="match status" value="1"/>
</dbReference>
<dbReference type="Pfam" id="PF01021">
    <property type="entry name" value="TYA"/>
    <property type="match status" value="2"/>
</dbReference>
<dbReference type="SUPFAM" id="SSF56672">
    <property type="entry name" value="DNA/RNA polymerases"/>
    <property type="match status" value="1"/>
</dbReference>
<dbReference type="SUPFAM" id="SSF53098">
    <property type="entry name" value="Ribonuclease H-like"/>
    <property type="match status" value="1"/>
</dbReference>
<dbReference type="PROSITE" id="PS00141">
    <property type="entry name" value="ASP_PROTEASE"/>
    <property type="match status" value="1"/>
</dbReference>
<dbReference type="PROSITE" id="PS50994">
    <property type="entry name" value="INTEGRASE"/>
    <property type="match status" value="1"/>
</dbReference>